<accession>Q3UV17</accession>
<name>K22O_MOUSE</name>
<reference evidence="7" key="1">
    <citation type="journal article" date="2005" name="Science">
        <title>The transcriptional landscape of the mammalian genome.</title>
        <authorList>
            <person name="Carninci P."/>
            <person name="Kasukawa T."/>
            <person name="Katayama S."/>
            <person name="Gough J."/>
            <person name="Frith M.C."/>
            <person name="Maeda N."/>
            <person name="Oyama R."/>
            <person name="Ravasi T."/>
            <person name="Lenhard B."/>
            <person name="Wells C."/>
            <person name="Kodzius R."/>
            <person name="Shimokawa K."/>
            <person name="Bajic V.B."/>
            <person name="Brenner S.E."/>
            <person name="Batalov S."/>
            <person name="Forrest A.R."/>
            <person name="Zavolan M."/>
            <person name="Davis M.J."/>
            <person name="Wilming L.G."/>
            <person name="Aidinis V."/>
            <person name="Allen J.E."/>
            <person name="Ambesi-Impiombato A."/>
            <person name="Apweiler R."/>
            <person name="Aturaliya R.N."/>
            <person name="Bailey T.L."/>
            <person name="Bansal M."/>
            <person name="Baxter L."/>
            <person name="Beisel K.W."/>
            <person name="Bersano T."/>
            <person name="Bono H."/>
            <person name="Chalk A.M."/>
            <person name="Chiu K.P."/>
            <person name="Choudhary V."/>
            <person name="Christoffels A."/>
            <person name="Clutterbuck D.R."/>
            <person name="Crowe M.L."/>
            <person name="Dalla E."/>
            <person name="Dalrymple B.P."/>
            <person name="de Bono B."/>
            <person name="Della Gatta G."/>
            <person name="di Bernardo D."/>
            <person name="Down T."/>
            <person name="Engstrom P."/>
            <person name="Fagiolini M."/>
            <person name="Faulkner G."/>
            <person name="Fletcher C.F."/>
            <person name="Fukushima T."/>
            <person name="Furuno M."/>
            <person name="Futaki S."/>
            <person name="Gariboldi M."/>
            <person name="Georgii-Hemming P."/>
            <person name="Gingeras T.R."/>
            <person name="Gojobori T."/>
            <person name="Green R.E."/>
            <person name="Gustincich S."/>
            <person name="Harbers M."/>
            <person name="Hayashi Y."/>
            <person name="Hensch T.K."/>
            <person name="Hirokawa N."/>
            <person name="Hill D."/>
            <person name="Huminiecki L."/>
            <person name="Iacono M."/>
            <person name="Ikeo K."/>
            <person name="Iwama A."/>
            <person name="Ishikawa T."/>
            <person name="Jakt M."/>
            <person name="Kanapin A."/>
            <person name="Katoh M."/>
            <person name="Kawasawa Y."/>
            <person name="Kelso J."/>
            <person name="Kitamura H."/>
            <person name="Kitano H."/>
            <person name="Kollias G."/>
            <person name="Krishnan S.P."/>
            <person name="Kruger A."/>
            <person name="Kummerfeld S.K."/>
            <person name="Kurochkin I.V."/>
            <person name="Lareau L.F."/>
            <person name="Lazarevic D."/>
            <person name="Lipovich L."/>
            <person name="Liu J."/>
            <person name="Liuni S."/>
            <person name="McWilliam S."/>
            <person name="Madan Babu M."/>
            <person name="Madera M."/>
            <person name="Marchionni L."/>
            <person name="Matsuda H."/>
            <person name="Matsuzawa S."/>
            <person name="Miki H."/>
            <person name="Mignone F."/>
            <person name="Miyake S."/>
            <person name="Morris K."/>
            <person name="Mottagui-Tabar S."/>
            <person name="Mulder N."/>
            <person name="Nakano N."/>
            <person name="Nakauchi H."/>
            <person name="Ng P."/>
            <person name="Nilsson R."/>
            <person name="Nishiguchi S."/>
            <person name="Nishikawa S."/>
            <person name="Nori F."/>
            <person name="Ohara O."/>
            <person name="Okazaki Y."/>
            <person name="Orlando V."/>
            <person name="Pang K.C."/>
            <person name="Pavan W.J."/>
            <person name="Pavesi G."/>
            <person name="Pesole G."/>
            <person name="Petrovsky N."/>
            <person name="Piazza S."/>
            <person name="Reed J."/>
            <person name="Reid J.F."/>
            <person name="Ring B.Z."/>
            <person name="Ringwald M."/>
            <person name="Rost B."/>
            <person name="Ruan Y."/>
            <person name="Salzberg S.L."/>
            <person name="Sandelin A."/>
            <person name="Schneider C."/>
            <person name="Schoenbach C."/>
            <person name="Sekiguchi K."/>
            <person name="Semple C.A."/>
            <person name="Seno S."/>
            <person name="Sessa L."/>
            <person name="Sheng Y."/>
            <person name="Shibata Y."/>
            <person name="Shimada H."/>
            <person name="Shimada K."/>
            <person name="Silva D."/>
            <person name="Sinclair B."/>
            <person name="Sperling S."/>
            <person name="Stupka E."/>
            <person name="Sugiura K."/>
            <person name="Sultana R."/>
            <person name="Takenaka Y."/>
            <person name="Taki K."/>
            <person name="Tammoja K."/>
            <person name="Tan S.L."/>
            <person name="Tang S."/>
            <person name="Taylor M.S."/>
            <person name="Tegner J."/>
            <person name="Teichmann S.A."/>
            <person name="Ueda H.R."/>
            <person name="van Nimwegen E."/>
            <person name="Verardo R."/>
            <person name="Wei C.L."/>
            <person name="Yagi K."/>
            <person name="Yamanishi H."/>
            <person name="Zabarovsky E."/>
            <person name="Zhu S."/>
            <person name="Zimmer A."/>
            <person name="Hide W."/>
            <person name="Bult C."/>
            <person name="Grimmond S.M."/>
            <person name="Teasdale R.D."/>
            <person name="Liu E.T."/>
            <person name="Brusic V."/>
            <person name="Quackenbush J."/>
            <person name="Wahlestedt C."/>
            <person name="Mattick J.S."/>
            <person name="Hume D.A."/>
            <person name="Kai C."/>
            <person name="Sasaki D."/>
            <person name="Tomaru Y."/>
            <person name="Fukuda S."/>
            <person name="Kanamori-Katayama M."/>
            <person name="Suzuki M."/>
            <person name="Aoki J."/>
            <person name="Arakawa T."/>
            <person name="Iida J."/>
            <person name="Imamura K."/>
            <person name="Itoh M."/>
            <person name="Kato T."/>
            <person name="Kawaji H."/>
            <person name="Kawagashira N."/>
            <person name="Kawashima T."/>
            <person name="Kojima M."/>
            <person name="Kondo S."/>
            <person name="Konno H."/>
            <person name="Nakano K."/>
            <person name="Ninomiya N."/>
            <person name="Nishio T."/>
            <person name="Okada M."/>
            <person name="Plessy C."/>
            <person name="Shibata K."/>
            <person name="Shiraki T."/>
            <person name="Suzuki S."/>
            <person name="Tagami M."/>
            <person name="Waki K."/>
            <person name="Watahiki A."/>
            <person name="Okamura-Oho Y."/>
            <person name="Suzuki H."/>
            <person name="Kawai J."/>
            <person name="Hayashizaki Y."/>
        </authorList>
    </citation>
    <scope>NUCLEOTIDE SEQUENCE [LARGE SCALE MRNA]</scope>
    <source>
        <strain evidence="7">C57BL/6J</strain>
        <tissue evidence="7">Vagina</tissue>
    </source>
</reference>
<reference key="2">
    <citation type="journal article" date="2010" name="Cell">
        <title>A tissue-specific atlas of mouse protein phosphorylation and expression.</title>
        <authorList>
            <person name="Huttlin E.L."/>
            <person name="Jedrychowski M.P."/>
            <person name="Elias J.E."/>
            <person name="Goswami T."/>
            <person name="Rad R."/>
            <person name="Beausoleil S.A."/>
            <person name="Villen J."/>
            <person name="Haas W."/>
            <person name="Sowa M.E."/>
            <person name="Gygi S.P."/>
        </authorList>
    </citation>
    <scope>IDENTIFICATION BY MASS SPECTROMETRY [LARGE SCALE ANALYSIS]</scope>
    <source>
        <tissue>Brain</tissue>
        <tissue>Brown adipose tissue</tissue>
        <tissue>Heart</tissue>
        <tissue>Kidney</tissue>
        <tissue>Liver</tissue>
        <tissue>Lung</tissue>
        <tissue>Pancreas</tissue>
        <tissue>Spleen</tissue>
        <tissue>Testis</tissue>
    </source>
</reference>
<comment type="function">
    <text evidence="1">Probably contributes to terminal cornification.</text>
</comment>
<comment type="subunit">
    <text evidence="6">Heterotetramer of two type I and two type II keratins.</text>
</comment>
<comment type="miscellaneous">
    <text evidence="6">There are two types of cytoskeletal and microfibrillar keratin: I (acidic; 40-55 kDa) and II (neutral to basic; 56-70 kDa).</text>
</comment>
<comment type="similarity">
    <text evidence="4">Belongs to the intermediate filament family.</text>
</comment>
<feature type="chain" id="PRO_0000361693" description="Keratin, type II cytoskeletal 2 oral">
    <location>
        <begin position="1"/>
        <end position="594"/>
    </location>
</feature>
<feature type="domain" description="IF rod" evidence="4">
    <location>
        <begin position="165"/>
        <end position="480"/>
    </location>
</feature>
<feature type="region of interest" description="Head" evidence="3">
    <location>
        <begin position="1"/>
        <end position="164"/>
    </location>
</feature>
<feature type="region of interest" description="Coil 1A" evidence="3">
    <location>
        <begin position="165"/>
        <end position="200"/>
    </location>
</feature>
<feature type="region of interest" description="Linker 1" evidence="3">
    <location>
        <begin position="201"/>
        <end position="221"/>
    </location>
</feature>
<feature type="region of interest" description="Coil 1B" evidence="3">
    <location>
        <begin position="222"/>
        <end position="313"/>
    </location>
</feature>
<feature type="region of interest" description="Linker 12" evidence="3">
    <location>
        <begin position="314"/>
        <end position="337"/>
    </location>
</feature>
<feature type="region of interest" description="Coil 2" evidence="3">
    <location>
        <begin position="338"/>
        <end position="476"/>
    </location>
</feature>
<feature type="region of interest" description="Tail" evidence="3">
    <location>
        <begin position="477"/>
        <end position="594"/>
    </location>
</feature>
<feature type="region of interest" description="Disordered" evidence="5">
    <location>
        <begin position="497"/>
        <end position="594"/>
    </location>
</feature>
<feature type="compositionally biased region" description="Gly residues" evidence="5">
    <location>
        <begin position="506"/>
        <end position="522"/>
    </location>
</feature>
<feature type="compositionally biased region" description="Low complexity" evidence="5">
    <location>
        <begin position="523"/>
        <end position="551"/>
    </location>
</feature>
<feature type="compositionally biased region" description="Polar residues" evidence="5">
    <location>
        <begin position="552"/>
        <end position="564"/>
    </location>
</feature>
<feature type="compositionally biased region" description="Low complexity" evidence="5">
    <location>
        <begin position="565"/>
        <end position="594"/>
    </location>
</feature>
<feature type="modified residue" description="Omega-N-methylarginine" evidence="2">
    <location>
        <position position="85"/>
    </location>
</feature>
<feature type="modified residue" description="Omega-N-methylarginine" evidence="2">
    <location>
        <position position="104"/>
    </location>
</feature>
<feature type="modified residue" description="Omega-N-methylarginine" evidence="2">
    <location>
        <position position="541"/>
    </location>
</feature>
<keyword id="KW-0175">Coiled coil</keyword>
<keyword id="KW-0403">Intermediate filament</keyword>
<keyword id="KW-0416">Keratin</keyword>
<keyword id="KW-0488">Methylation</keyword>
<keyword id="KW-1185">Reference proteome</keyword>
<proteinExistence type="evidence at protein level"/>
<protein>
    <recommendedName>
        <fullName evidence="1">Keratin, type II cytoskeletal 2 oral</fullName>
    </recommendedName>
    <alternativeName>
        <fullName evidence="8">Keratin-76</fullName>
        <shortName>K76</shortName>
    </alternativeName>
    <alternativeName>
        <fullName>Type-II keratin Kb9</fullName>
    </alternativeName>
</protein>
<organism>
    <name type="scientific">Mus musculus</name>
    <name type="common">Mouse</name>
    <dbReference type="NCBI Taxonomy" id="10090"/>
    <lineage>
        <taxon>Eukaryota</taxon>
        <taxon>Metazoa</taxon>
        <taxon>Chordata</taxon>
        <taxon>Craniata</taxon>
        <taxon>Vertebrata</taxon>
        <taxon>Euteleostomi</taxon>
        <taxon>Mammalia</taxon>
        <taxon>Eutheria</taxon>
        <taxon>Euarchontoglires</taxon>
        <taxon>Glires</taxon>
        <taxon>Rodentia</taxon>
        <taxon>Myomorpha</taxon>
        <taxon>Muroidea</taxon>
        <taxon>Muridae</taxon>
        <taxon>Murinae</taxon>
        <taxon>Mus</taxon>
        <taxon>Mus</taxon>
    </lineage>
</organism>
<gene>
    <name evidence="8" type="primary">Krt76</name>
</gene>
<dbReference type="EMBL" id="AK137676">
    <property type="protein sequence ID" value="BAE23456.1"/>
    <property type="molecule type" value="mRNA"/>
</dbReference>
<dbReference type="CCDS" id="CCDS27866.1"/>
<dbReference type="RefSeq" id="NP_001028349.1">
    <property type="nucleotide sequence ID" value="NM_001033177.2"/>
</dbReference>
<dbReference type="SMR" id="Q3UV17"/>
<dbReference type="BioGRID" id="218485">
    <property type="interactions" value="14"/>
</dbReference>
<dbReference type="FunCoup" id="Q3UV17">
    <property type="interactions" value="26"/>
</dbReference>
<dbReference type="STRING" id="10090.ENSMUSP00000097754"/>
<dbReference type="GlyGen" id="Q3UV17">
    <property type="glycosylation" value="1 site, 1 O-linked glycan (1 site)"/>
</dbReference>
<dbReference type="iPTMnet" id="Q3UV17"/>
<dbReference type="PhosphoSitePlus" id="Q3UV17"/>
<dbReference type="SwissPalm" id="Q3UV17"/>
<dbReference type="CPTAC" id="non-CPTAC-3705"/>
<dbReference type="jPOST" id="Q3UV17"/>
<dbReference type="PaxDb" id="10090-ENSMUSP00000097754"/>
<dbReference type="PeptideAtlas" id="Q3UV17"/>
<dbReference type="ProteomicsDB" id="268941"/>
<dbReference type="Antibodypedia" id="14669">
    <property type="antibodies" value="708 antibodies from 24 providers"/>
</dbReference>
<dbReference type="DNASU" id="77055"/>
<dbReference type="Ensembl" id="ENSMUST00000100179.2">
    <property type="protein sequence ID" value="ENSMUSP00000097754.2"/>
    <property type="gene ID" value="ENSMUSG00000075402.2"/>
</dbReference>
<dbReference type="GeneID" id="77055"/>
<dbReference type="KEGG" id="mmu:77055"/>
<dbReference type="UCSC" id="uc007xue.1">
    <property type="organism name" value="mouse"/>
</dbReference>
<dbReference type="AGR" id="MGI:1924305"/>
<dbReference type="CTD" id="51350"/>
<dbReference type="MGI" id="MGI:1924305">
    <property type="gene designation" value="Krt76"/>
</dbReference>
<dbReference type="VEuPathDB" id="HostDB:ENSMUSG00000075402"/>
<dbReference type="eggNOG" id="ENOG502QURK">
    <property type="taxonomic scope" value="Eukaryota"/>
</dbReference>
<dbReference type="GeneTree" id="ENSGT00940000162365"/>
<dbReference type="HOGENOM" id="CLU_012560_6_1_1"/>
<dbReference type="InParanoid" id="Q3UV17"/>
<dbReference type="OMA" id="MSSCMAR"/>
<dbReference type="OrthoDB" id="2441647at2759"/>
<dbReference type="PhylomeDB" id="Q3UV17"/>
<dbReference type="TreeFam" id="TF317854"/>
<dbReference type="Reactome" id="R-MMU-6805567">
    <property type="pathway name" value="Keratinization"/>
</dbReference>
<dbReference type="Reactome" id="R-MMU-6809371">
    <property type="pathway name" value="Formation of the cornified envelope"/>
</dbReference>
<dbReference type="BioGRID-ORCS" id="77055">
    <property type="hits" value="4 hits in 76 CRISPR screens"/>
</dbReference>
<dbReference type="PRO" id="PR:Q3UV17"/>
<dbReference type="Proteomes" id="UP000000589">
    <property type="component" value="Chromosome 15"/>
</dbReference>
<dbReference type="RNAct" id="Q3UV17">
    <property type="molecule type" value="protein"/>
</dbReference>
<dbReference type="Bgee" id="ENSMUSG00000075402">
    <property type="expression patterns" value="Expressed in mesodermal cell in embryo and 10 other cell types or tissues"/>
</dbReference>
<dbReference type="GO" id="GO:0045095">
    <property type="term" value="C:keratin filament"/>
    <property type="evidence" value="ECO:0007669"/>
    <property type="project" value="InterPro"/>
</dbReference>
<dbReference type="GO" id="GO:0008544">
    <property type="term" value="P:epidermis development"/>
    <property type="evidence" value="ECO:0000315"/>
    <property type="project" value="MGI"/>
</dbReference>
<dbReference type="GO" id="GO:0043473">
    <property type="term" value="P:pigmentation"/>
    <property type="evidence" value="ECO:0000315"/>
    <property type="project" value="MGI"/>
</dbReference>
<dbReference type="GO" id="GO:0048733">
    <property type="term" value="P:sebaceous gland development"/>
    <property type="evidence" value="ECO:0000315"/>
    <property type="project" value="MGI"/>
</dbReference>
<dbReference type="FunFam" id="1.20.5.1160:FF:000001">
    <property type="entry name" value="Keratin type II"/>
    <property type="match status" value="1"/>
</dbReference>
<dbReference type="FunFam" id="1.20.5.170:FF:000004">
    <property type="entry name" value="Keratin, type II cytoskeletal 5"/>
    <property type="match status" value="1"/>
</dbReference>
<dbReference type="FunFam" id="1.20.5.500:FF:000001">
    <property type="entry name" value="Type II keratin 23"/>
    <property type="match status" value="1"/>
</dbReference>
<dbReference type="Gene3D" id="1.20.5.170">
    <property type="match status" value="1"/>
</dbReference>
<dbReference type="Gene3D" id="1.20.5.500">
    <property type="entry name" value="Single helix bin"/>
    <property type="match status" value="1"/>
</dbReference>
<dbReference type="Gene3D" id="1.20.5.1160">
    <property type="entry name" value="Vasodilator-stimulated phosphoprotein"/>
    <property type="match status" value="1"/>
</dbReference>
<dbReference type="InterPro" id="IPR018039">
    <property type="entry name" value="IF_conserved"/>
</dbReference>
<dbReference type="InterPro" id="IPR039008">
    <property type="entry name" value="IF_rod_dom"/>
</dbReference>
<dbReference type="InterPro" id="IPR032444">
    <property type="entry name" value="Keratin_2_head"/>
</dbReference>
<dbReference type="InterPro" id="IPR003054">
    <property type="entry name" value="Keratin_II"/>
</dbReference>
<dbReference type="PANTHER" id="PTHR45616">
    <property type="entry name" value="GATA-TYPE DOMAIN-CONTAINING PROTEIN"/>
    <property type="match status" value="1"/>
</dbReference>
<dbReference type="PANTHER" id="PTHR45616:SF29">
    <property type="entry name" value="KERATIN, TYPE II CYTOSKELETAL 2 ORAL"/>
    <property type="match status" value="1"/>
</dbReference>
<dbReference type="Pfam" id="PF00038">
    <property type="entry name" value="Filament"/>
    <property type="match status" value="1"/>
</dbReference>
<dbReference type="Pfam" id="PF16208">
    <property type="entry name" value="Keratin_2_head"/>
    <property type="match status" value="1"/>
</dbReference>
<dbReference type="PRINTS" id="PR01276">
    <property type="entry name" value="TYPE2KERATIN"/>
</dbReference>
<dbReference type="SMART" id="SM01391">
    <property type="entry name" value="Filament"/>
    <property type="match status" value="1"/>
</dbReference>
<dbReference type="SUPFAM" id="SSF64593">
    <property type="entry name" value="Intermediate filament protein, coiled coil region"/>
    <property type="match status" value="3"/>
</dbReference>
<dbReference type="PROSITE" id="PS00226">
    <property type="entry name" value="IF_ROD_1"/>
    <property type="match status" value="1"/>
</dbReference>
<dbReference type="PROSITE" id="PS51842">
    <property type="entry name" value="IF_ROD_2"/>
    <property type="match status" value="1"/>
</dbReference>
<evidence type="ECO:0000250" key="1">
    <source>
        <dbReference type="UniProtKB" id="Q01546"/>
    </source>
</evidence>
<evidence type="ECO:0000250" key="2">
    <source>
        <dbReference type="UniProtKB" id="Q6IFZ6"/>
    </source>
</evidence>
<evidence type="ECO:0000255" key="3"/>
<evidence type="ECO:0000255" key="4">
    <source>
        <dbReference type="PROSITE-ProRule" id="PRU01188"/>
    </source>
</evidence>
<evidence type="ECO:0000256" key="5">
    <source>
        <dbReference type="SAM" id="MobiDB-lite"/>
    </source>
</evidence>
<evidence type="ECO:0000305" key="6"/>
<evidence type="ECO:0000312" key="7">
    <source>
        <dbReference type="EMBL" id="BAE23456.1"/>
    </source>
</evidence>
<evidence type="ECO:0000312" key="8">
    <source>
        <dbReference type="MGI" id="MGI:1924305"/>
    </source>
</evidence>
<sequence>MSRQACKKSFSCGSQGFSGHSAVVSGSSRSSCVARSGAASGGACGFRSGAGSLGSHSLYSLGGSKSISISVAAGGSRAGGFSGGRSSCGSGFGSGYGGSLGGSRGMGAGFGGPSGFGGAGGFGRPGSFGPGSCPGGIQEVTINQSLLQPLNVEIDPQIGQVKAQEREQIKTLNNKFASFIDKVRFLEQQNKVLETKWELLQQQTIRSGSGPQNLEPFFESYISCLRKQLDSLLGAKGSLEGELKSMQDLVEDFKKKYEEEINRRTAAENEFVGLKKDVDGAFMNKVELQAKVDSLTDEINFLRTLYDMELSQIQSHVSDTSVVLSMDNNRCLDLDSIIAEVKAQYEDIAQKSKAEAEALYQTKLGELQTTAGRHGDDLRSTKSEIMDLNRMIQRLRAEIENVKKQNTNMQTSIAEAEQRGERALKDADTKFQDLQVALQKAKEDMARLLKEYQELMNVKLALDVEIATYRKLLEGEECRLSGEFQNAVSISVVSNVTSTSSSGSFRGTGGSNYGGDSSGRSGGSSSSSSRGSSSRGSSGSRLGSGGSISVSQQRMGFNSGGSQTSVGSSYKSGRGGSSSVQFSQTTSSSQQRSK</sequence>